<dbReference type="EMBL" id="AF102849">
    <property type="protein sequence ID" value="AAK00051.1"/>
    <property type="molecule type" value="mRNA"/>
</dbReference>
<dbReference type="EMBL" id="BC019972">
    <property type="protein sequence ID" value="AAH19972.1"/>
    <property type="molecule type" value="mRNA"/>
</dbReference>
<dbReference type="CCDS" id="CCDS25382.1"/>
<dbReference type="RefSeq" id="NP_203537.1">
    <property type="nucleotide sequence ID" value="NM_033373.2"/>
</dbReference>
<dbReference type="SMR" id="Q99PS0"/>
<dbReference type="FunCoup" id="Q99PS0">
    <property type="interactions" value="130"/>
</dbReference>
<dbReference type="STRING" id="10090.ENSMUSP00000006969"/>
<dbReference type="iPTMnet" id="Q99PS0"/>
<dbReference type="PhosphoSitePlus" id="Q99PS0"/>
<dbReference type="PaxDb" id="10090-ENSMUSP00000006969"/>
<dbReference type="ProteomicsDB" id="269051"/>
<dbReference type="Antibodypedia" id="1978">
    <property type="antibodies" value="289 antibodies from 29 providers"/>
</dbReference>
<dbReference type="DNASU" id="94179"/>
<dbReference type="Ensembl" id="ENSMUST00000006969.8">
    <property type="protein sequence ID" value="ENSMUSP00000006969.8"/>
    <property type="gene ID" value="ENSMUSG00000006777.8"/>
</dbReference>
<dbReference type="GeneID" id="94179"/>
<dbReference type="KEGG" id="mmu:94179"/>
<dbReference type="UCSC" id="uc007liv.1">
    <property type="organism name" value="mouse"/>
</dbReference>
<dbReference type="AGR" id="MGI:2148866"/>
<dbReference type="CTD" id="25984"/>
<dbReference type="MGI" id="MGI:2148866">
    <property type="gene designation" value="Krt23"/>
</dbReference>
<dbReference type="VEuPathDB" id="HostDB:ENSMUSG00000006777"/>
<dbReference type="eggNOG" id="ENOG502QTH0">
    <property type="taxonomic scope" value="Eukaryota"/>
</dbReference>
<dbReference type="GeneTree" id="ENSGT00940000161077"/>
<dbReference type="HOGENOM" id="CLU_012560_8_1_1"/>
<dbReference type="InParanoid" id="Q99PS0"/>
<dbReference type="OMA" id="SCILEWH"/>
<dbReference type="OrthoDB" id="2441647at2759"/>
<dbReference type="PhylomeDB" id="Q99PS0"/>
<dbReference type="TreeFam" id="TF332742"/>
<dbReference type="Reactome" id="R-MMU-6805567">
    <property type="pathway name" value="Keratinization"/>
</dbReference>
<dbReference type="Reactome" id="R-MMU-6809371">
    <property type="pathway name" value="Formation of the cornified envelope"/>
</dbReference>
<dbReference type="BioGRID-ORCS" id="94179">
    <property type="hits" value="2 hits in 79 CRISPR screens"/>
</dbReference>
<dbReference type="PRO" id="PR:Q99PS0"/>
<dbReference type="Proteomes" id="UP000000589">
    <property type="component" value="Chromosome 11"/>
</dbReference>
<dbReference type="RNAct" id="Q99PS0">
    <property type="molecule type" value="protein"/>
</dbReference>
<dbReference type="Bgee" id="ENSMUSG00000006777">
    <property type="expression patterns" value="Expressed in otic placode and 100 other cell types or tissues"/>
</dbReference>
<dbReference type="ExpressionAtlas" id="Q99PS0">
    <property type="expression patterns" value="baseline and differential"/>
</dbReference>
<dbReference type="GO" id="GO:0005882">
    <property type="term" value="C:intermediate filament"/>
    <property type="evidence" value="ECO:0007669"/>
    <property type="project" value="UniProtKB-KW"/>
</dbReference>
<dbReference type="GO" id="GO:0005198">
    <property type="term" value="F:structural molecule activity"/>
    <property type="evidence" value="ECO:0007669"/>
    <property type="project" value="InterPro"/>
</dbReference>
<dbReference type="FunFam" id="1.20.5.170:FF:000002">
    <property type="entry name" value="Type I keratin KA11"/>
    <property type="match status" value="1"/>
</dbReference>
<dbReference type="Gene3D" id="1.20.5.170">
    <property type="match status" value="1"/>
</dbReference>
<dbReference type="Gene3D" id="1.20.5.500">
    <property type="entry name" value="Single helix bin"/>
    <property type="match status" value="1"/>
</dbReference>
<dbReference type="Gene3D" id="1.20.5.1160">
    <property type="entry name" value="Vasodilator-stimulated phosphoprotein"/>
    <property type="match status" value="1"/>
</dbReference>
<dbReference type="InterPro" id="IPR018039">
    <property type="entry name" value="IF_conserved"/>
</dbReference>
<dbReference type="InterPro" id="IPR039008">
    <property type="entry name" value="IF_rod_dom"/>
</dbReference>
<dbReference type="InterPro" id="IPR002957">
    <property type="entry name" value="Keratin_I"/>
</dbReference>
<dbReference type="PANTHER" id="PTHR23239">
    <property type="entry name" value="INTERMEDIATE FILAMENT"/>
    <property type="match status" value="1"/>
</dbReference>
<dbReference type="PANTHER" id="PTHR23239:SF44">
    <property type="entry name" value="KERATIN, TYPE I CYTOSKELETAL 23"/>
    <property type="match status" value="1"/>
</dbReference>
<dbReference type="Pfam" id="PF00038">
    <property type="entry name" value="Filament"/>
    <property type="match status" value="1"/>
</dbReference>
<dbReference type="PRINTS" id="PR01248">
    <property type="entry name" value="TYPE1KERATIN"/>
</dbReference>
<dbReference type="SMART" id="SM01391">
    <property type="entry name" value="Filament"/>
    <property type="match status" value="1"/>
</dbReference>
<dbReference type="SUPFAM" id="SSF64593">
    <property type="entry name" value="Intermediate filament protein, coiled coil region"/>
    <property type="match status" value="2"/>
</dbReference>
<dbReference type="PROSITE" id="PS00226">
    <property type="entry name" value="IF_ROD_1"/>
    <property type="match status" value="1"/>
</dbReference>
<dbReference type="PROSITE" id="PS51842">
    <property type="entry name" value="IF_ROD_2"/>
    <property type="match status" value="1"/>
</dbReference>
<keyword id="KW-0175">Coiled coil</keyword>
<keyword id="KW-0403">Intermediate filament</keyword>
<keyword id="KW-0416">Keratin</keyword>
<keyword id="KW-1185">Reference proteome</keyword>
<gene>
    <name type="primary">Krt23</name>
    <name type="synonym">Haik1</name>
    <name type="synonym">Krt1-23</name>
</gene>
<accession>Q99PS0</accession>
<proteinExistence type="evidence at protein level"/>
<sequence length="422" mass="48027">MNSSHSFNQTYSASVHSLGSTRGRQGSCHRAPSVHGGAGGVRISLSFTTPGCLPPGGSWGSGRSSPLLGGNGKATMQNLNDRLATYLEKVRALEEANSKLETRILRWHQEREPSHRKDYSQYEENISRLQEQIVDGKMANAHIVVLIDNARMAVDDFNLKFENEHSLKKDLEIEVEGLRKTLDDLTIVTTDLEQEVEGMRKELILMKKRHEQEMEENHLPSDFKVSVKVDTTPGEDLIKVLEDMRQEYELIIKKKHQELDTWFREQSAAMAQEVASPAPVQGNQSDIHELRRTFQALEIDLQAQHSRKTALENMLTETRARYSCRLQDMQQIISHYEEELIQLRQDLERQNNEHKVLLGIKTHLEKEIATYRRLLEGDTEGTMDGSESRLKGSEASTIKAITQESVNGRIVLSQVNEIQKHI</sequence>
<organism>
    <name type="scientific">Mus musculus</name>
    <name type="common">Mouse</name>
    <dbReference type="NCBI Taxonomy" id="10090"/>
    <lineage>
        <taxon>Eukaryota</taxon>
        <taxon>Metazoa</taxon>
        <taxon>Chordata</taxon>
        <taxon>Craniata</taxon>
        <taxon>Vertebrata</taxon>
        <taxon>Euteleostomi</taxon>
        <taxon>Mammalia</taxon>
        <taxon>Eutheria</taxon>
        <taxon>Euarchontoglires</taxon>
        <taxon>Glires</taxon>
        <taxon>Rodentia</taxon>
        <taxon>Myomorpha</taxon>
        <taxon>Muroidea</taxon>
        <taxon>Muridae</taxon>
        <taxon>Murinae</taxon>
        <taxon>Mus</taxon>
        <taxon>Mus</taxon>
    </lineage>
</organism>
<name>K1C23_MOUSE</name>
<evidence type="ECO:0000250" key="1"/>
<evidence type="ECO:0000255" key="2">
    <source>
        <dbReference type="PROSITE-ProRule" id="PRU01188"/>
    </source>
</evidence>
<evidence type="ECO:0000256" key="3">
    <source>
        <dbReference type="SAM" id="MobiDB-lite"/>
    </source>
</evidence>
<protein>
    <recommendedName>
        <fullName>Keratin, type I cytoskeletal 23</fullName>
    </recommendedName>
    <alternativeName>
        <fullName>Cytokeratin-23</fullName>
        <shortName>CK-23</shortName>
    </alternativeName>
    <alternativeName>
        <fullName>Keratin-23</fullName>
        <shortName>K23</shortName>
    </alternativeName>
</protein>
<comment type="subunit">
    <text evidence="1">Heterotetramer of two type I and two type II keratins.</text>
</comment>
<comment type="miscellaneous">
    <text>There are two types of cytoskeletal and microfibrillar keratin: I (acidic; 40-55 kDa) and II (neutral to basic; 56-70 kDa).</text>
</comment>
<comment type="similarity">
    <text evidence="2">Belongs to the intermediate filament family.</text>
</comment>
<feature type="chain" id="PRO_0000063678" description="Keratin, type I cytoskeletal 23">
    <location>
        <begin position="1"/>
        <end position="422"/>
    </location>
</feature>
<feature type="domain" description="IF rod" evidence="2">
    <location>
        <begin position="72"/>
        <end position="382"/>
    </location>
</feature>
<feature type="region of interest" description="Head">
    <location>
        <begin position="1"/>
        <end position="71"/>
    </location>
</feature>
<feature type="region of interest" description="Disordered" evidence="3">
    <location>
        <begin position="1"/>
        <end position="35"/>
    </location>
</feature>
<feature type="region of interest" description="Coil 1A">
    <location>
        <begin position="72"/>
        <end position="107"/>
    </location>
</feature>
<feature type="region of interest" description="Linker 1">
    <location>
        <begin position="108"/>
        <end position="125"/>
    </location>
</feature>
<feature type="region of interest" description="Coil 1B">
    <location>
        <begin position="126"/>
        <end position="217"/>
    </location>
</feature>
<feature type="region of interest" description="Linker 12">
    <location>
        <begin position="218"/>
        <end position="240"/>
    </location>
</feature>
<feature type="region of interest" description="Coil 2">
    <location>
        <begin position="241"/>
        <end position="378"/>
    </location>
</feature>
<feature type="region of interest" description="Rod-like helical tail">
    <location>
        <begin position="379"/>
        <end position="422"/>
    </location>
</feature>
<feature type="compositionally biased region" description="Polar residues" evidence="3">
    <location>
        <begin position="1"/>
        <end position="24"/>
    </location>
</feature>
<reference key="1">
    <citation type="journal article" date="2001" name="Genes Chromosomes Cancer">
        <title>Keratin 23 (K23), a novel acidic keratin, is highly induced by histone deacetylase inhibitors during differentiation of pancreatic cancer cells.</title>
        <authorList>
            <person name="Zhang J.-S."/>
            <person name="Wang L."/>
            <person name="Huang H."/>
            <person name="Nelson M."/>
            <person name="Smith D.I."/>
        </authorList>
    </citation>
    <scope>NUCLEOTIDE SEQUENCE [MRNA]</scope>
</reference>
<reference key="2">
    <citation type="journal article" date="2004" name="Genome Res.">
        <title>The status, quality, and expansion of the NIH full-length cDNA project: the Mammalian Gene Collection (MGC).</title>
        <authorList>
            <consortium name="The MGC Project Team"/>
        </authorList>
    </citation>
    <scope>NUCLEOTIDE SEQUENCE [LARGE SCALE MRNA]</scope>
    <source>
        <strain>FVB/N</strain>
        <tissue>Salivary gland</tissue>
    </source>
</reference>
<reference key="3">
    <citation type="journal article" date="2010" name="Cell">
        <title>A tissue-specific atlas of mouse protein phosphorylation and expression.</title>
        <authorList>
            <person name="Huttlin E.L."/>
            <person name="Jedrychowski M.P."/>
            <person name="Elias J.E."/>
            <person name="Goswami T."/>
            <person name="Rad R."/>
            <person name="Beausoleil S.A."/>
            <person name="Villen J."/>
            <person name="Haas W."/>
            <person name="Sowa M.E."/>
            <person name="Gygi S.P."/>
        </authorList>
    </citation>
    <scope>IDENTIFICATION BY MASS SPECTROMETRY [LARGE SCALE ANALYSIS]</scope>
    <source>
        <tissue>Pancreas</tissue>
    </source>
</reference>